<keyword id="KW-0928">Hypersensitive response elicitation</keyword>
<keyword id="KW-0964">Secreted</keyword>
<proteinExistence type="inferred from homology"/>
<organism>
    <name type="scientific">Pectobacterium carotovorum subsp. carotovorum</name>
    <name type="common">Erwinia carotovora subsp. carotovora</name>
    <dbReference type="NCBI Taxonomy" id="555"/>
    <lineage>
        <taxon>Bacteria</taxon>
        <taxon>Pseudomonadati</taxon>
        <taxon>Pseudomonadota</taxon>
        <taxon>Gammaproteobacteria</taxon>
        <taxon>Enterobacterales</taxon>
        <taxon>Pectobacteriaceae</taxon>
        <taxon>Pectobacterium</taxon>
    </lineage>
</organism>
<name>HRPN_PECCC</name>
<gene>
    <name type="primary">hrpN</name>
</gene>
<sequence length="356" mass="35621">MLNSLGGGASLQITIKAGGNGGLFPSQSSQNGGSPSQSAFGGQRSNIAEQLSDIMTTMMFMGSMMGGGMSGGLGGLGSSLGGLGGGLLGGGLGGGLGSSLGSGLGSALGGGLGGALGAGMNAMNPSAMMGSLLFSALEDLLGGGMSQQQGGLFGNKQPSSPEISAYTQGVNDALSAILGNGLSQTKGQTSPLQLGNNGLQGLSGAGAFNQLGSTLGMSVGQKAGLQELNNISTHNDSPTRYFVDKEDRGMAKEIGQFMDQYPEVFGKAEYQKDNWQTAKQEDKSWAKALSKPDDDGMTKGSMDKFMKAVGMIKSAIRGDTGNTNLSARGNGGASLGIDAAMIGDRIVNMGLKKLSS</sequence>
<evidence type="ECO:0000256" key="1">
    <source>
        <dbReference type="SAM" id="MobiDB-lite"/>
    </source>
</evidence>
<evidence type="ECO:0000305" key="2"/>
<protein>
    <recommendedName>
        <fullName>Harpin HrpN</fullName>
    </recommendedName>
    <alternativeName>
        <fullName>Harpin-Ecc</fullName>
    </alternativeName>
</protein>
<reference key="1">
    <citation type="journal article" date="1996" name="Mol. Plant Microbe Interact.">
        <title>The RsmA-mutants of Erwinia carotovora subsp. carotovora strain Ecc71 overexpress hrpNEcc and elicit a hypersensitive reaction-like response in tobacco leaves.</title>
        <authorList>
            <person name="Cui Y."/>
            <person name="Madi L."/>
            <person name="Mukherjee A."/>
            <person name="Dumenyo C.K."/>
            <person name="Chatterjee A.K."/>
        </authorList>
    </citation>
    <scope>NUCLEOTIDE SEQUENCE [GENOMIC DNA]</scope>
    <source>
        <strain>71</strain>
    </source>
</reference>
<accession>Q47279</accession>
<feature type="chain" id="PRO_0000084068" description="Harpin HrpN">
    <location>
        <begin position="1"/>
        <end position="356" status="greater than"/>
    </location>
</feature>
<feature type="region of interest" description="Disordered" evidence="1">
    <location>
        <begin position="22"/>
        <end position="42"/>
    </location>
</feature>
<feature type="region of interest" description="Disordered" evidence="1">
    <location>
        <begin position="280"/>
        <end position="300"/>
    </location>
</feature>
<feature type="compositionally biased region" description="Low complexity" evidence="1">
    <location>
        <begin position="25"/>
        <end position="38"/>
    </location>
</feature>
<feature type="non-terminal residue">
    <location>
        <position position="356"/>
    </location>
</feature>
<dbReference type="EMBL" id="L78834">
    <property type="protein sequence ID" value="AAB49733.1"/>
    <property type="molecule type" value="Genomic_DNA"/>
</dbReference>
<dbReference type="GO" id="GO:0005576">
    <property type="term" value="C:extracellular region"/>
    <property type="evidence" value="ECO:0007669"/>
    <property type="project" value="UniProtKB-SubCell"/>
</dbReference>
<dbReference type="GO" id="GO:0052040">
    <property type="term" value="P:symbiont-mediated perturbation of host programmed cell death"/>
    <property type="evidence" value="ECO:0007669"/>
    <property type="project" value="UniProtKB-KW"/>
</dbReference>
<dbReference type="InterPro" id="IPR006961">
    <property type="entry name" value="HrpN/Z"/>
</dbReference>
<dbReference type="Pfam" id="PF04877">
    <property type="entry name" value="Harpin"/>
    <property type="match status" value="1"/>
</dbReference>
<comment type="function">
    <text>Elicits the hypersensitive response (HR) in the plant upon infection. Harpin elicits HR in non-hosts and is also required for pathogenicity in host plants.</text>
</comment>
<comment type="subcellular location">
    <subcellularLocation>
        <location>Secreted</location>
    </subcellularLocation>
    <text>Via the HRP secretion pathway.</text>
</comment>
<comment type="similarity">
    <text evidence="2">Belongs to the harpin HrpN family.</text>
</comment>